<evidence type="ECO:0000250" key="1"/>
<evidence type="ECO:0000250" key="2">
    <source>
        <dbReference type="UniProtKB" id="P03300"/>
    </source>
</evidence>
<evidence type="ECO:0000250" key="3">
    <source>
        <dbReference type="UniProtKB" id="P03305"/>
    </source>
</evidence>
<evidence type="ECO:0000250" key="4">
    <source>
        <dbReference type="UniProtKB" id="P03306"/>
    </source>
</evidence>
<evidence type="ECO:0000250" key="5">
    <source>
        <dbReference type="UniProtKB" id="P03308"/>
    </source>
</evidence>
<evidence type="ECO:0000250" key="6">
    <source>
        <dbReference type="UniProtKB" id="P03311"/>
    </source>
</evidence>
<evidence type="ECO:0000255" key="7"/>
<evidence type="ECO:0000255" key="8">
    <source>
        <dbReference type="PROSITE-ProRule" id="PRU00539"/>
    </source>
</evidence>
<evidence type="ECO:0000255" key="9">
    <source>
        <dbReference type="PROSITE-ProRule" id="PRU00551"/>
    </source>
</evidence>
<evidence type="ECO:0000255" key="10">
    <source>
        <dbReference type="PROSITE-ProRule" id="PRU01222"/>
    </source>
</evidence>
<evidence type="ECO:0000255" key="11">
    <source>
        <dbReference type="PROSITE-ProRule" id="PRU01235"/>
    </source>
</evidence>
<evidence type="ECO:0000256" key="12">
    <source>
        <dbReference type="SAM" id="MobiDB-lite"/>
    </source>
</evidence>
<evidence type="ECO:0000269" key="13">
    <source>
    </source>
</evidence>
<evidence type="ECO:0000305" key="14"/>
<evidence type="ECO:0000312" key="15">
    <source>
        <dbReference type="Proteomes" id="UP000013600"/>
    </source>
</evidence>
<dbReference type="EC" id="3.4.22.46" evidence="3"/>
<dbReference type="EC" id="3.6.1.15" evidence="3"/>
<dbReference type="EC" id="3.4.22.28" evidence="3"/>
<dbReference type="EC" id="2.7.7.48"/>
<dbReference type="EMBL" id="AY593835">
    <property type="protein sequence ID" value="AAT01778.1"/>
    <property type="molecule type" value="Genomic_RNA"/>
</dbReference>
<dbReference type="EMBL" id="AF308157">
    <property type="protein sequence ID" value="AAG45408.1"/>
    <property type="molecule type" value="Genomic_RNA"/>
</dbReference>
<dbReference type="RefSeq" id="NP_658990.1">
    <property type="nucleotide sequence ID" value="NC_004004.1"/>
</dbReference>
<dbReference type="SMR" id="Q6PMV1"/>
<dbReference type="MEROPS" id="C03.008"/>
<dbReference type="MEROPS" id="C28.001"/>
<dbReference type="Proteomes" id="UP000000682">
    <property type="component" value="Segment"/>
</dbReference>
<dbReference type="Proteomes" id="UP000013600">
    <property type="component" value="Genome"/>
</dbReference>
<dbReference type="GO" id="GO:0044162">
    <property type="term" value="C:host cell cytoplasmic vesicle membrane"/>
    <property type="evidence" value="ECO:0007669"/>
    <property type="project" value="UniProtKB-SubCell"/>
</dbReference>
<dbReference type="GO" id="GO:0044167">
    <property type="term" value="C:host cell endoplasmic reticulum membrane"/>
    <property type="evidence" value="ECO:0007669"/>
    <property type="project" value="UniProtKB-SubCell"/>
</dbReference>
<dbReference type="GO" id="GO:0042025">
    <property type="term" value="C:host cell nucleus"/>
    <property type="evidence" value="ECO:0007669"/>
    <property type="project" value="UniProtKB-SubCell"/>
</dbReference>
<dbReference type="GO" id="GO:0016020">
    <property type="term" value="C:membrane"/>
    <property type="evidence" value="ECO:0007669"/>
    <property type="project" value="UniProtKB-KW"/>
</dbReference>
<dbReference type="GO" id="GO:0039618">
    <property type="term" value="C:T=pseudo3 icosahedral viral capsid"/>
    <property type="evidence" value="ECO:0007669"/>
    <property type="project" value="UniProtKB-KW"/>
</dbReference>
<dbReference type="GO" id="GO:0005524">
    <property type="term" value="F:ATP binding"/>
    <property type="evidence" value="ECO:0007669"/>
    <property type="project" value="UniProtKB-KW"/>
</dbReference>
<dbReference type="GO" id="GO:0015267">
    <property type="term" value="F:channel activity"/>
    <property type="evidence" value="ECO:0007669"/>
    <property type="project" value="UniProtKB-KW"/>
</dbReference>
<dbReference type="GO" id="GO:0004197">
    <property type="term" value="F:cysteine-type endopeptidase activity"/>
    <property type="evidence" value="ECO:0007669"/>
    <property type="project" value="UniProtKB-EC"/>
</dbReference>
<dbReference type="GO" id="GO:0017111">
    <property type="term" value="F:ribonucleoside triphosphate phosphatase activity"/>
    <property type="evidence" value="ECO:0007669"/>
    <property type="project" value="UniProtKB-EC"/>
</dbReference>
<dbReference type="GO" id="GO:0003723">
    <property type="term" value="F:RNA binding"/>
    <property type="evidence" value="ECO:0007669"/>
    <property type="project" value="InterPro"/>
</dbReference>
<dbReference type="GO" id="GO:0003724">
    <property type="term" value="F:RNA helicase activity"/>
    <property type="evidence" value="ECO:0007669"/>
    <property type="project" value="InterPro"/>
</dbReference>
<dbReference type="GO" id="GO:0003968">
    <property type="term" value="F:RNA-directed RNA polymerase activity"/>
    <property type="evidence" value="ECO:0007669"/>
    <property type="project" value="UniProtKB-KW"/>
</dbReference>
<dbReference type="GO" id="GO:0005198">
    <property type="term" value="F:structural molecule activity"/>
    <property type="evidence" value="ECO:0007669"/>
    <property type="project" value="InterPro"/>
</dbReference>
<dbReference type="GO" id="GO:0075512">
    <property type="term" value="P:clathrin-dependent endocytosis of virus by host cell"/>
    <property type="evidence" value="ECO:0007669"/>
    <property type="project" value="UniProtKB-KW"/>
</dbReference>
<dbReference type="GO" id="GO:0006351">
    <property type="term" value="P:DNA-templated transcription"/>
    <property type="evidence" value="ECO:0007669"/>
    <property type="project" value="InterPro"/>
</dbReference>
<dbReference type="GO" id="GO:0034220">
    <property type="term" value="P:monoatomic ion transmembrane transport"/>
    <property type="evidence" value="ECO:0007669"/>
    <property type="project" value="UniProtKB-KW"/>
</dbReference>
<dbReference type="GO" id="GO:0006508">
    <property type="term" value="P:proteolysis"/>
    <property type="evidence" value="ECO:0007669"/>
    <property type="project" value="UniProtKB-KW"/>
</dbReference>
<dbReference type="GO" id="GO:0006417">
    <property type="term" value="P:regulation of translation"/>
    <property type="evidence" value="ECO:0007669"/>
    <property type="project" value="UniProtKB-KW"/>
</dbReference>
<dbReference type="GO" id="GO:0039525">
    <property type="term" value="P:symbiont-mediated perturbation of host chromatin organization"/>
    <property type="evidence" value="ECO:0007669"/>
    <property type="project" value="UniProtKB-KW"/>
</dbReference>
<dbReference type="GO" id="GO:0019082">
    <property type="term" value="P:viral protein processing"/>
    <property type="evidence" value="ECO:0007669"/>
    <property type="project" value="InterPro"/>
</dbReference>
<dbReference type="GO" id="GO:0039694">
    <property type="term" value="P:viral RNA genome replication"/>
    <property type="evidence" value="ECO:0007669"/>
    <property type="project" value="InterPro"/>
</dbReference>
<dbReference type="GO" id="GO:0019062">
    <property type="term" value="P:virion attachment to host cell"/>
    <property type="evidence" value="ECO:0007669"/>
    <property type="project" value="UniProtKB-KW"/>
</dbReference>
<dbReference type="CDD" id="cd23210">
    <property type="entry name" value="Aphthovirus_RdRp"/>
    <property type="match status" value="1"/>
</dbReference>
<dbReference type="CDD" id="cd00205">
    <property type="entry name" value="rhv_like"/>
    <property type="match status" value="3"/>
</dbReference>
<dbReference type="FunFam" id="1.20.960.20:FF:000002">
    <property type="entry name" value="Genome polyprotein"/>
    <property type="match status" value="1"/>
</dbReference>
<dbReference type="FunFam" id="2.40.10.10:FF:000108">
    <property type="entry name" value="Genome polyprotein"/>
    <property type="match status" value="1"/>
</dbReference>
<dbReference type="FunFam" id="2.60.120.20:FF:000005">
    <property type="entry name" value="Genome polyprotein"/>
    <property type="match status" value="1"/>
</dbReference>
<dbReference type="FunFam" id="2.60.120.20:FF:000006">
    <property type="entry name" value="Genome polyprotein"/>
    <property type="match status" value="1"/>
</dbReference>
<dbReference type="FunFam" id="3.30.70.270:FF:000031">
    <property type="entry name" value="Genome polyprotein"/>
    <property type="match status" value="1"/>
</dbReference>
<dbReference type="Gene3D" id="1.20.960.20">
    <property type="match status" value="1"/>
</dbReference>
<dbReference type="Gene3D" id="2.60.120.20">
    <property type="match status" value="3"/>
</dbReference>
<dbReference type="Gene3D" id="3.30.70.270">
    <property type="match status" value="2"/>
</dbReference>
<dbReference type="Gene3D" id="4.10.90.10">
    <property type="entry name" value="Capsid protein VP4 superfamily, Picornavirus"/>
    <property type="match status" value="1"/>
</dbReference>
<dbReference type="Gene3D" id="3.90.70.10">
    <property type="entry name" value="Cysteine proteinases"/>
    <property type="match status" value="1"/>
</dbReference>
<dbReference type="Gene3D" id="2.40.10.10">
    <property type="entry name" value="Trypsin-like serine proteases"/>
    <property type="match status" value="2"/>
</dbReference>
<dbReference type="InterPro" id="IPR015031">
    <property type="entry name" value="Capsid_VP4_Picornavir"/>
</dbReference>
<dbReference type="InterPro" id="IPR037080">
    <property type="entry name" value="Capsid_VP4_sf_Picornavirus"/>
</dbReference>
<dbReference type="InterPro" id="IPR043502">
    <property type="entry name" value="DNA/RNA_pol_sf"/>
</dbReference>
<dbReference type="InterPro" id="IPR004080">
    <property type="entry name" value="FMDV_VP1_coat"/>
</dbReference>
<dbReference type="InterPro" id="IPR004004">
    <property type="entry name" value="Helic/Pol/Pept_Calicivir-typ"/>
</dbReference>
<dbReference type="InterPro" id="IPR000605">
    <property type="entry name" value="Helicase_SF3_ssDNA/RNA_vir"/>
</dbReference>
<dbReference type="InterPro" id="IPR014759">
    <property type="entry name" value="Helicase_SF3_ssRNA_vir"/>
</dbReference>
<dbReference type="InterPro" id="IPR027417">
    <property type="entry name" value="P-loop_NTPase"/>
</dbReference>
<dbReference type="InterPro" id="IPR038765">
    <property type="entry name" value="Papain-like_cys_pep_sf"/>
</dbReference>
<dbReference type="InterPro" id="IPR044067">
    <property type="entry name" value="PCV_3C_PRO"/>
</dbReference>
<dbReference type="InterPro" id="IPR008739">
    <property type="entry name" value="Peptidase_C28"/>
</dbReference>
<dbReference type="InterPro" id="IPR000199">
    <property type="entry name" value="Peptidase_C3A/C3B_picornavir"/>
</dbReference>
<dbReference type="InterPro" id="IPR009003">
    <property type="entry name" value="Peptidase_S1_PA"/>
</dbReference>
<dbReference type="InterPro" id="IPR043504">
    <property type="entry name" value="Peptidase_S1_PA_chymotrypsin"/>
</dbReference>
<dbReference type="InterPro" id="IPR001676">
    <property type="entry name" value="Picornavirus_capsid"/>
</dbReference>
<dbReference type="InterPro" id="IPR043128">
    <property type="entry name" value="Rev_trsase/Diguanyl_cyclase"/>
</dbReference>
<dbReference type="InterPro" id="IPR033703">
    <property type="entry name" value="Rhv-like"/>
</dbReference>
<dbReference type="InterPro" id="IPR001205">
    <property type="entry name" value="RNA-dir_pol_C"/>
</dbReference>
<dbReference type="InterPro" id="IPR007094">
    <property type="entry name" value="RNA-dir_pol_PSvirus"/>
</dbReference>
<dbReference type="InterPro" id="IPR029053">
    <property type="entry name" value="Viral_coat"/>
</dbReference>
<dbReference type="Pfam" id="PF05408">
    <property type="entry name" value="Peptidase_C28"/>
    <property type="match status" value="1"/>
</dbReference>
<dbReference type="Pfam" id="PF00548">
    <property type="entry name" value="Peptidase_C3"/>
    <property type="match status" value="1"/>
</dbReference>
<dbReference type="Pfam" id="PF00680">
    <property type="entry name" value="RdRP_1"/>
    <property type="match status" value="1"/>
</dbReference>
<dbReference type="Pfam" id="PF00073">
    <property type="entry name" value="Rhv"/>
    <property type="match status" value="2"/>
</dbReference>
<dbReference type="Pfam" id="PF22663">
    <property type="entry name" value="Rhv_5"/>
    <property type="match status" value="1"/>
</dbReference>
<dbReference type="Pfam" id="PF00910">
    <property type="entry name" value="RNA_helicase"/>
    <property type="match status" value="1"/>
</dbReference>
<dbReference type="Pfam" id="PF08935">
    <property type="entry name" value="VP4_2"/>
    <property type="match status" value="1"/>
</dbReference>
<dbReference type="PRINTS" id="PR00918">
    <property type="entry name" value="CALICVIRUSNS"/>
</dbReference>
<dbReference type="PRINTS" id="PR01542">
    <property type="entry name" value="FMDVP1COAT"/>
</dbReference>
<dbReference type="SUPFAM" id="SSF54001">
    <property type="entry name" value="Cysteine proteinases"/>
    <property type="match status" value="1"/>
</dbReference>
<dbReference type="SUPFAM" id="SSF56672">
    <property type="entry name" value="DNA/RNA polymerases"/>
    <property type="match status" value="1"/>
</dbReference>
<dbReference type="SUPFAM" id="SSF52540">
    <property type="entry name" value="P-loop containing nucleoside triphosphate hydrolases"/>
    <property type="match status" value="1"/>
</dbReference>
<dbReference type="SUPFAM" id="SSF88633">
    <property type="entry name" value="Positive stranded ssRNA viruses"/>
    <property type="match status" value="2"/>
</dbReference>
<dbReference type="SUPFAM" id="SSF50494">
    <property type="entry name" value="Trypsin-like serine proteases"/>
    <property type="match status" value="1"/>
</dbReference>
<dbReference type="PROSITE" id="PS51887">
    <property type="entry name" value="APHTHOVIRUS_LPRO"/>
    <property type="match status" value="1"/>
</dbReference>
<dbReference type="PROSITE" id="PS51874">
    <property type="entry name" value="PCV_3C_PRO"/>
    <property type="match status" value="1"/>
</dbReference>
<dbReference type="PROSITE" id="PS50507">
    <property type="entry name" value="RDRP_SSRNA_POS"/>
    <property type="match status" value="1"/>
</dbReference>
<dbReference type="PROSITE" id="PS51218">
    <property type="entry name" value="SF3_HELICASE_2"/>
    <property type="match status" value="1"/>
</dbReference>
<comment type="function">
    <molecule>Leader protease</molecule>
    <text evidence="3 5">Autocatalytically cleaves itself from the polyprotein at the L/VP0 junction. Also cleaves the host translation initiation factors EIF4G1 and EIF4G3, in order to shut off the capped cellular mRNA transcription. Plays a role in counteracting host innate antiviral response using diverse mechanisms. Possesses a deubiquitinase activity acting on both 'Lys-48' and 'Lys-63'-linked polyubiquitin chains. In turn, inhibits the ubiquitination and subsequent activation of key signaling molecules of type I IFN response such as host RIGI, TBK1, TRAF3 and TRAF6. Inhibits host NF-kappa-B activity by inducing a decrease in RELA mRNA levels. Cleaves a peptide bond in the C-terminus of host ISG15, resulting in the damaging of this modifier that can no longer be attached to target proteins. Also cleaves host G3BP1 and G3BP2 in order to inhibit cytoplasmic stress granules assembly.</text>
</comment>
<comment type="function">
    <molecule>Capsid protein VP4</molecule>
    <text evidence="2">Lies on the inner surface of the capsid shell. After binding to the host receptor, the capsid undergoes conformational changes. Capsid protein VP4 is released, capsid protein VP1 N-terminus is externalized, and together, they shape a pore in the host membrane through which the viral genome is translocated into the host cell cytoplasm. After genome has been released, the channel shrinks.</text>
</comment>
<comment type="function">
    <molecule>Capsid protein VP2</molecule>
    <text evidence="3 4">Forms an icosahedral capsid of pseudo T=3 symmetry with capsid proteins VP1 and VP3. The capsid is composed of 60 copies of each capsid protein organized in the form of twelve pentamers and encloses the viral positive strand RNA genome (By similarity). Upon acidifcation in the endosome, dissociates into pentamers (By similarity).</text>
</comment>
<comment type="function">
    <molecule>Capsid protein VP3</molecule>
    <text evidence="3 4">Forms an icosahedral capsid of pseudo T=3 symmetry with capsid proteins VP0 and VP3. The capsid is composed of 60 copies of each capsid protein organized in the form of twelve pentamers and encloses the viral positive strand RNA genome (By similarity). Upon acidifcation in the endosome, dissociates into pentamers (By similarity).</text>
</comment>
<comment type="function">
    <molecule>Capsid protein VP1</molecule>
    <text evidence="3 4">Forms an icosahedral capsid of pseudo T=3 symmetry with capsid proteins VP2 and VP3. The capsid is composed of 60 copies of each capsid protein organized in the form of twelve pentamers and encloses the viral positive strand RNA genome. Mediates cell entry by attachment to an integrin receptor, usually host ITGAV/ITGB6. In addition, targets host MAVS to suppress type I IFN pathway (By similarity). Upon acidifcation in the endosome, dissociates into pentamers (By similarity).</text>
</comment>
<comment type="function">
    <molecule>Protein 2A</molecule>
    <text evidence="3">Mediates self-processing of the polyprotein by a translational effect termed 'ribosome skipping'. Mechanistically, 2A-mediated cleavage occurs between the C-terminal glycine and the proline of the downstream protein 2B. In the case of foot-and-mouth disease virus, the 2A oligopeptide is post-translationally 'trimmed' from the C-terminus of the upstream protein 1D by 3C proteinase.</text>
</comment>
<comment type="function">
    <molecule>Protein 2B</molecule>
    <text evidence="3">Plays an essential role in the virus replication cycle by acting as a viroporin. Creates a pore in the host endoplasmic reticulum and as a consequence releases Ca2+ in the cytoplasm of infected cell. In turn, high levels of cytoplasmic calcium may trigger membrane trafficking and transport of viral ER-associated proteins to viroplasms, sites of viral genome replication.</text>
</comment>
<comment type="function">
    <molecule>Protein 2C</molecule>
    <text evidence="3">Associates with and induces structural rearrangements of intracellular membranes. Triggers host autophagy by interacting with host BECN1 and thereby promotes viral replication. Participates in viral replication and interacts with host DHX9. Displays RNA-binding, nucleotide binding and NTPase activities. May play a role in virion morphogenesis and viral RNA encapsidation by interacting with the capsid protein VP3.</text>
</comment>
<comment type="function">
    <molecule>Protein 3A</molecule>
    <text evidence="3">Plays important roles in virus replication, virulence and host range. Cooperates with host DDX56 to inhibit IRF3 nuclear translocation and subsequent type I interferon production.</text>
</comment>
<comment type="function">
    <molecule>Protein 3B-1</molecule>
    <text evidence="3">Covalently linked to the 5'-end of both the positive-strand and negative-strand genomic RNAs. Acts as a genome-linked replication primer.</text>
</comment>
<comment type="function">
    <molecule>Protein 3B-2</molecule>
    <text evidence="3">Covalently linked to the 5'-end of both the positive-strand and negative-strand genomic RNAs. Acts as a genome-linked replication primer.</text>
</comment>
<comment type="function">
    <molecule>Protein 3B-3</molecule>
    <text evidence="3">Covalently linked to the 5'-end of both the positive-strand and negative-strand genomic RNAs. Acts as a genome-linked replication primer.</text>
</comment>
<comment type="function">
    <molecule>Protease 3C</molecule>
    <text evidence="3">Cysteine protease that generates mature viral proteins from the precursor polyprotein. In addition to its proteolytic activity, binds to viral RNA and thus influences viral genome replication. RNA and substrate bind cooperatively to the protease.</text>
</comment>
<comment type="function">
    <text evidence="3">RNA-directed RNA polymerase 3D-POL replicates genomic and antigenomic RNA by recognizing replications specific signals. Covalently attaches UMP to a tyrosine of VPg, which is used to prime RNA synthesis. The positive stranded RNA genome is first replicated at virus induced membranous vesicles, creating a dsRNA genomic replication form. This dsRNA is then used as template to synthesize positive stranded RNA genomes. ss(+)RNA genomes are either translated, replicated or encapsidated.</text>
</comment>
<comment type="catalytic activity">
    <molecule>Leader protease</molecule>
    <reaction>
        <text>Autocatalytically cleaves itself from the polyprotein of the foot-and-mouth disease virus by hydrolysis of a Lys-|-Gly bond, but then cleaves host cell initiation factor eIF-4G at bonds -Gly-|-Arg- and -Lys-|-Arg-.</text>
        <dbReference type="EC" id="3.4.22.46"/>
    </reaction>
</comment>
<comment type="catalytic activity">
    <molecule>Protein 2C</molecule>
    <reaction evidence="3">
        <text>a ribonucleoside 5'-triphosphate + H2O = a ribonucleoside 5'-diphosphate + phosphate + H(+)</text>
        <dbReference type="Rhea" id="RHEA:23680"/>
        <dbReference type="ChEBI" id="CHEBI:15377"/>
        <dbReference type="ChEBI" id="CHEBI:15378"/>
        <dbReference type="ChEBI" id="CHEBI:43474"/>
        <dbReference type="ChEBI" id="CHEBI:57930"/>
        <dbReference type="ChEBI" id="CHEBI:61557"/>
        <dbReference type="EC" id="3.6.1.15"/>
    </reaction>
</comment>
<comment type="catalytic activity">
    <molecule>RNA-directed RNA polymerase 3D-POL</molecule>
    <reaction evidence="8">
        <text>RNA(n) + a ribonucleoside 5'-triphosphate = RNA(n+1) + diphosphate</text>
        <dbReference type="Rhea" id="RHEA:21248"/>
        <dbReference type="Rhea" id="RHEA-COMP:14527"/>
        <dbReference type="Rhea" id="RHEA-COMP:17342"/>
        <dbReference type="ChEBI" id="CHEBI:33019"/>
        <dbReference type="ChEBI" id="CHEBI:61557"/>
        <dbReference type="ChEBI" id="CHEBI:140395"/>
        <dbReference type="EC" id="2.7.7.48"/>
    </reaction>
</comment>
<comment type="catalytic activity">
    <molecule>Protease 3C</molecule>
    <reaction evidence="10">
        <text>Selective cleavage of Gln-|-Gly bond in the poliovirus polyprotein. In other picornavirus reactions Glu may be substituted for Gln, and Ser or Thr for Gly.</text>
        <dbReference type="EC" id="3.4.22.28"/>
    </reaction>
</comment>
<comment type="subunit">
    <molecule>Leader protease</molecule>
    <text evidence="3">Interacts with host ISG15.</text>
</comment>
<comment type="subunit">
    <molecule>Capsid protein VP1</molecule>
    <text evidence="3">Interacts (via R-G-D motif) with host ITGAV/ITGB6 (By similarity). Interacts with host MAVS; this interaction inhibits binding of host TRAF3 to MAVS, thereby suppressing interferon-mediated responses (By similarity).</text>
</comment>
<comment type="subunit">
    <molecule>Protein 2B</molecule>
    <text evidence="14">Forms homooligomers.</text>
</comment>
<comment type="subunit">
    <molecule>Protein 2C</molecule>
    <text evidence="3">Homohexamer. Interacts with host VIM. Interacts with host BECN1.</text>
</comment>
<comment type="subunit">
    <molecule>Protein 3A</molecule>
    <text evidence="3">Interacts with host DCTN3.</text>
</comment>
<comment type="subunit">
    <molecule>Protein 3B-1</molecule>
    <text evidence="6">Interacts with RNA-dependent RNA polymerase; this interaction allows 3B-1 to binds 2 polymerases and act as a primer. It also allows the recruitment of the RNA-dependent RNA polymerase to host membranes.</text>
</comment>
<comment type="subunit">
    <molecule>Protein 3B-2</molecule>
    <text evidence="6">Interacts with RNA-dependent RNA polymerase; this interaction allows 3B-2 to act as a primer.</text>
</comment>
<comment type="subunit">
    <molecule>Protein 3B-3</molecule>
    <text evidence="6">Interacts with RNA-dependent RNA polymerase; this interaction allows 3B-3 to act as a primer.</text>
</comment>
<comment type="subunit">
    <molecule>RNA-directed RNA polymerase 3D-POL</molecule>
    <text evidence="6">Interacts with 3B-1; this interaction allows 3B-1 to binds 2 polymerases and act as a primer. It also allows the recruitment of the RNA-dependent RNA polymerase to host membranes (By similarity). Interacts with 3B-2; this interaction allows 3B-2 to act as a primer (By similarity). Interacts with 3B-3; this interaction allows 3B-3 to act as a primer (By similarity).</text>
</comment>
<comment type="subcellular location">
    <molecule>Leader protease</molecule>
    <subcellularLocation>
        <location evidence="3">Host nucleus</location>
    </subcellularLocation>
    <subcellularLocation>
        <location evidence="3">Host cytoplasm</location>
    </subcellularLocation>
</comment>
<comment type="subcellular location">
    <molecule>Capsid protein VP3</molecule>
    <subcellularLocation>
        <location evidence="3">Virion</location>
    </subcellularLocation>
    <subcellularLocation>
        <location evidence="14">Host cytoplasm</location>
    </subcellularLocation>
</comment>
<comment type="subcellular location">
    <molecule>Capsid protein VP1</molecule>
    <subcellularLocation>
        <location evidence="3">Virion</location>
    </subcellularLocation>
    <subcellularLocation>
        <location evidence="14">Host cytoplasm</location>
    </subcellularLocation>
</comment>
<comment type="subcellular location">
    <molecule>Capsid protein VP2</molecule>
    <subcellularLocation>
        <location evidence="3">Virion</location>
    </subcellularLocation>
    <subcellularLocation>
        <location evidence="14">Host cytoplasm</location>
    </subcellularLocation>
</comment>
<comment type="subcellular location">
    <molecule>Protein 2B</molecule>
    <subcellularLocation>
        <location evidence="3">Host endoplasmic reticulum membrane</location>
    </subcellularLocation>
</comment>
<comment type="subcellular location">
    <molecule>Protein 2C</molecule>
    <subcellularLocation>
        <location evidence="14">Host cytoplasmic vesicle membrane</location>
        <topology evidence="14">Peripheral membrane protein</topology>
        <orientation evidence="14">Cytoplasmic side</orientation>
    </subcellularLocation>
    <text evidence="1">Probably localizes to the surface of intracellular membrane vesicles that are induced after virus infection as the site for viral RNA replication. These vesicles are derived from the endoplasmic reticulum (By similarity).</text>
</comment>
<comment type="subcellular location">
    <molecule>Protein 3A</molecule>
    <subcellularLocation>
        <location evidence="3">Host cytoplasm</location>
    </subcellularLocation>
    <subcellularLocation>
        <location evidence="13">Host endoplasmic reticulum membrane</location>
    </subcellularLocation>
    <text evidence="3">Interacts with host endoplasmic reticulum membranes through its hydrophobic stretch, while its N- and C-terminus face the cytosol being accessible to other viral proteins for viral replication.</text>
</comment>
<comment type="subcellular location">
    <molecule>Protein 3B-1</molecule>
    <subcellularLocation>
        <location evidence="14">Virion</location>
    </subcellularLocation>
</comment>
<comment type="subcellular location">
    <molecule>Protein 3B-2</molecule>
    <subcellularLocation>
        <location evidence="14">Virion</location>
    </subcellularLocation>
</comment>
<comment type="subcellular location">
    <molecule>Protein 3B-3</molecule>
    <subcellularLocation>
        <location evidence="14">Virion</location>
    </subcellularLocation>
</comment>
<comment type="subcellular location">
    <molecule>Protease 3C</molecule>
    <subcellularLocation>
        <location evidence="14">Host cytoplasm</location>
    </subcellularLocation>
</comment>
<comment type="subcellular location">
    <molecule>RNA-directed RNA polymerase 3D-POL</molecule>
    <subcellularLocation>
        <location evidence="3">Host cytoplasm</location>
    </subcellularLocation>
    <subcellularLocation>
        <location evidence="3">Host nucleus</location>
    </subcellularLocation>
</comment>
<comment type="PTM">
    <molecule>Leader protease</molecule>
    <text evidence="3">Removes six residues from its own C-terminus, generating sLb(pro).</text>
</comment>
<comment type="PTM">
    <molecule>Genome polyprotein</molecule>
    <text evidence="3">Specific enzymatic cleavages in vivo by the viral proteases yield a variety of precursors and mature proteins. The polyprotein seems to be cotranslationally cleaved at the 2A/2B junction by a ribosomal skip from one codon to the next without formation of a peptide bond. This process would release the L-P1-2A peptide from the translational complex.</text>
</comment>
<comment type="PTM">
    <molecule>Capsid protein VP0</molecule>
    <text evidence="3">During virion maturation, immature virions are rendered infectious following cleavage of VP0 into VP4 and VP2. This maturation seems to be an autocatalytic event triggered by the presence of RNA in the capsid and is followed by a conformational change of the particle.</text>
</comment>
<comment type="PTM">
    <molecule>Capsid protein VP4</molecule>
    <text evidence="6">Myristoylation is required during RNA encapsidation and formation of the mature virus particle.</text>
</comment>
<comment type="PTM">
    <molecule>Protein 3B-1</molecule>
    <text evidence="3">Uridylylated by the polymerase and covalently linked to the 5'-end of genomic RNA. These uridylylated forms act as a nucleotide-peptide primer for the polymerase.</text>
</comment>
<comment type="PTM">
    <molecule>Protein 3B-2</molecule>
    <text evidence="3">Uridylylated by the polymerase and covalently linked to the 5'-end of genomic RNA. These uridylylated forms act as a nucleotide-peptide primer for the polymerase.</text>
</comment>
<comment type="PTM">
    <molecule>Protein 3B-3</molecule>
    <text evidence="3">Uridylylated by the polymerase and covalently linked to the 5'-end of genomic RNA. These uridylylated forms act as a nucleotide-peptide primer for the polymerase.</text>
</comment>
<comment type="miscellaneous">
    <molecule>Capsid protein VP1</molecule>
    <text evidence="14">Contains the main antigenic determinants of the virion; therefore, changes in its sequence must be responsible for the high antigenic variability of the virus.</text>
</comment>
<comment type="miscellaneous">
    <text>The capsid protein VP1 contains the main antigenic determinants of the virion; therefore, changes in its sequence must be responsible for the high antigenic variability of the virus.</text>
</comment>
<comment type="similarity">
    <text evidence="14">Belongs to the picornaviruses polyprotein family.</text>
</comment>
<sequence length="2322" mass="257605">MNTTDCFIALLYALREIKALFLSRTQGKMEFTLYNGEKKVFYSRPNNHDNCWLNAILQLFRYVDEPFLEWVYDSPENLTLEAINKLEEITGLELHEGGPPALVVWNIKHLLYTGIGTASRPSEVCMVDGTDMCLADFHAGIFLKGQDHAVFACVTSDGWYAIDDEDFYPWTPNPADVLVFVPYDQEPFNAEWKAKVQKRLRGAGQSSPTTGSQNQSGNTGSIINNYYMQQYQNSMDTQLGDNAISGGSNEGSTDTTSTHTNNTQNNDWFSKLANTAFSGLFGALLADKKTEETTLLEDRILTTRNGHTTSTTQSSVGVTYGYATAEDFVSGPNTSGLETRVVQAERFFKTHLFDWVTSDPFGRCHLLELPTDHKGVYGSLTDSYAYMRNGWDVEVTAVGNQFNGGCLLVAMVPELCSISKRELYQLTLFPHQFINPRTNMTAHITVPYLGVNRYDQYKVHKPWTLVVMVVAPLTVNNEGAPQIKVYANIAPTNVHVAGELPSKEGIFPVACSDGYGGLVTTDPKTADPVYGKVFNPPRNLLPGRFTNLLDVAEACPTFLHFDGDVPYVTTKTDSDRVLAQFDLSLAAKHMSNTFLAGLAQYYTQYSGTINLHFMFTGPTDAKARYMVAYAPPGMEPPKTPEAAAHCIHAEWDTGLNSKFTFSIPYLSAADYAYTASDVAETTNVQGWVCLFQITHGKADGDALVVLASAGKDFDLRLPVDARTQTTSAGESADPVTATVENYGGETQVQRRQHTDIAFILDRFVKVKPKEQVNVLDLMQIPAHTLVGALLRTATYYFSDLELAVKHEGDLTWVPNGAPETALDNTTNPTAYHKEPLTRLALPYTAPHRVLATVYNGSSKYGDTSTNNVRGDLQVLAQKAERTLPTSFNFGAIKATRVTELLYRMKRAETYCPRPLLAIQPSDARHKQRIVAPAKQLLNFDLLKLAGDVESNPGPFFFSDVRANFTKLVDTVNQMQEDMSTKHGPDFNRLVSAFEELAAGVKAIRTGLDEAKPWYKLIKLLSRLSCMAAVAARSKDPVLVAIMLADTGLEILDSTFVVKKISDSLSSLFHVPAPAFSFGAPILLAGLVKVASSFFQSTPEDLERAEKQLKARDINDIFAVLKNGEWLVKLILAIRDWIKAWIASEEKFVTMTDLVPGILERQRDLNDPGKYKEAKEWLDNARQACLKSGNVHIANLCKVVAPAPSKSRPEPVVVCLRGKSGQGKSFLANVLAQAISTHFTGRTDSVWYCPPDPDHFDGYNQQTVVVMDDLGQNPDGKDFKYFAQMVSTTGFIPPMASLEDKGKPFNSKVIIATTNLYSGFTPKTMVCPDALNRRFHFDIDVSAKDGYKINNKLDIVKALEDTHANPVAMFQYDCALLNGMAVEMKRMQQDMFKPQPPLQNIYQLVQEVIERVELHEKVSSHLIFKQISIPSQKSVLYFLIEKGQHEAAIEFFEGMVHDSIKEELRPLIQQTSFVKRAFKRLKENFEVVALCLTLLANIVIMLRQARKRYQSVDDPLDGDVTLGDAEKNPLETSGASAVGFRERSPTEQGTREDANAEPVVFGREQPRAEGPYAGPLERQKPLKVKAELPQQEGPYAGPMERQKPLKVKAKAPVVKEGPYEGPVKKPVALKVKAKNLIVTESGAPPTDLQKMVMGNTKPVELILDGKTVAICCATGVFGTAYLVPRHLFAEKYDKIMLDGRALTDSDYRVFEFEIKVKGQDMLSDAALMVLHRGNRVRDITKHFRDVARMKKGTPVVGVINNADVGRLIFSGEALTYKDIVVCMDGDTMPGLFAYRASTKAGYCGGAVLAKDGAETFIVGTHSAGGNGIGYCSCVSRSMLLKMKAHIDPEPHHEGLIVDTRDVEERVHVMRKTKLAPTVAHGVFNPEFGPAALSNKDPRLNEGVVLDDVIFSKHKGDTRMSEEDKALFRRCAADYASRLHSVLGTANAPLSVYEAIKGVDGLDAMEPDTAPGLPWALQGKRRGALIDFENGTVGPEVEAALKLMESREYKFVCQTFLKDEIRPLEKVRAGKTRIVDVLPVEHILYTRMMIGRFCAQMHSNNGPQIGSAVGCNPDVDWQRFGTHFAQYKNVWDVDYSAFDANHCSDAMNIMFEEVFRTEFGFHPNAEWILKTLVNTEHAYENKRIVVEGGMPSGCSATSIINTILNNIYVLYALRRHYEGVELDTYTMISYGDDIVVASDYDLDFEALKPHFKSLGQTITPADKSDKGFVLGHSITDVTFLKRHFHMDYGTGFYKPVMASKTLEAILSFARRGTIQEKLISVAGLAVHSGPDEYRRLFEPFQGLFEIPSYRSLYLRWVNAVCGDA</sequence>
<organism evidence="15">
    <name type="scientific">Foot-and-mouth disease virus (isolate Swine/Taiwan/OTai/1997 serotype O)</name>
    <name type="common">FMDV</name>
    <dbReference type="NCBI Taxonomy" id="649897"/>
    <lineage>
        <taxon>Viruses</taxon>
        <taxon>Riboviria</taxon>
        <taxon>Orthornavirae</taxon>
        <taxon>Pisuviricota</taxon>
        <taxon>Pisoniviricetes</taxon>
        <taxon>Picornavirales</taxon>
        <taxon>Picornaviridae</taxon>
        <taxon>Caphthovirinae</taxon>
        <taxon>Aphthovirus</taxon>
        <taxon>Foot-and-mouth disease virus</taxon>
    </lineage>
</organism>
<proteinExistence type="inferred from homology"/>
<reference key="1">
    <citation type="journal article" date="2000" name="J. Virol.">
        <title>Genetic determinants of altered virulence of Taiwanese foot-and-mouth disease virus.</title>
        <authorList>
            <person name="Beard C.W."/>
            <person name="Mason P.W."/>
        </authorList>
    </citation>
    <scope>NUCLEOTIDE SEQUENCE [LARGE SCALE GENOMIC DNA]</scope>
    <source>
        <strain>Isolate Swine/Taiwan/OTai/1997 serotype O</strain>
    </source>
</reference>
<reference key="2">
    <citation type="journal article" date="2005" name="J. Virol.">
        <title>Comparative genomics of foot-and-mouth disease virus.</title>
        <authorList>
            <person name="Carrillo C."/>
            <person name="Tulman E.R."/>
            <person name="Delhon G."/>
            <person name="Lu Z."/>
            <person name="Carreno A."/>
            <person name="Vagnozzi A."/>
            <person name="Kutish G.F."/>
            <person name="Rock D.L."/>
        </authorList>
    </citation>
    <scope>NUCLEOTIDE SEQUENCE [LARGE SCALE GENOMIC DNA]</scope>
    <source>
        <strain>Isolate Swine/Taiwan/OTai/1997 serotype O</strain>
    </source>
</reference>
<reference key="3">
    <citation type="journal article" date="2001" name="Virology">
        <title>Subcellular distribution of the foot-and-mouth disease virus 3A protein in cells infected with viruses encoding wild-type and bovine-attenuated forms of 3A.</title>
        <authorList>
            <person name="O'Donnell V.K."/>
            <person name="Pacheco J.M."/>
            <person name="Henry T.M."/>
            <person name="Mason P.W."/>
        </authorList>
    </citation>
    <scope>SUBCELLULAR LOCATION (PROTEIN 3A)</scope>
</reference>
<organismHost>
    <name type="scientific">Bos taurus</name>
    <name type="common">Bovine</name>
    <dbReference type="NCBI Taxonomy" id="9913"/>
</organismHost>
<organismHost>
    <name type="scientific">Capra hircus</name>
    <name type="common">Goat</name>
    <dbReference type="NCBI Taxonomy" id="9925"/>
</organismHost>
<organismHost>
    <name type="scientific">Cervidae</name>
    <name type="common">Deer</name>
    <dbReference type="NCBI Taxonomy" id="9850"/>
</organismHost>
<organismHost>
    <name type="scientific">Erinaceidae</name>
    <name type="common">hedgehogs</name>
    <dbReference type="NCBI Taxonomy" id="9363"/>
</organismHost>
<organismHost>
    <name type="scientific">Loxodonta africana</name>
    <name type="common">African elephant</name>
    <dbReference type="NCBI Taxonomy" id="9785"/>
</organismHost>
<organismHost>
    <name type="scientific">Ovis aries</name>
    <name type="common">Sheep</name>
    <dbReference type="NCBI Taxonomy" id="9940"/>
</organismHost>
<organismHost>
    <name type="scientific">Rattus norvegicus</name>
    <name type="common">Rat</name>
    <dbReference type="NCBI Taxonomy" id="10116"/>
</organismHost>
<organismHost>
    <name type="scientific">Sus scrofa</name>
    <name type="common">Pig</name>
    <dbReference type="NCBI Taxonomy" id="9823"/>
</organismHost>
<feature type="chain" id="PRO_0000460502" description="Genome polyprotein">
    <location>
        <begin position="1"/>
        <end position="2322"/>
    </location>
</feature>
<feature type="chain" id="PRO_0000460503" description="Leader protease">
    <location>
        <begin position="1"/>
        <end position="201"/>
    </location>
</feature>
<feature type="chain" id="PRO_0000460504" description="Capsid protein VP0">
    <location>
        <begin position="202"/>
        <end position="504"/>
    </location>
</feature>
<feature type="chain" id="PRO_0000460505" description="Capsid protein VP4">
    <location>
        <begin position="202"/>
        <end position="286"/>
    </location>
</feature>
<feature type="chain" id="PRO_0000460506" description="Capsid protein VP2">
    <location>
        <begin position="287"/>
        <end position="504"/>
    </location>
</feature>
<feature type="chain" id="PRO_0000460507" description="Capsid protein VP3">
    <location>
        <begin position="505"/>
        <end position="724"/>
    </location>
</feature>
<feature type="chain" id="PRO_0000460508" description="Capsid protein VP1">
    <location>
        <begin position="725"/>
        <end position="935"/>
    </location>
</feature>
<feature type="chain" id="PRO_0000460509" description="Protein 2A">
    <location>
        <begin position="936"/>
        <end position="953"/>
    </location>
</feature>
<feature type="chain" id="PRO_0000460510" description="Protein 2B">
    <location>
        <begin position="954"/>
        <end position="1107"/>
    </location>
</feature>
<feature type="chain" id="PRO_0000460511" description="Protein 2C">
    <location>
        <begin position="1108"/>
        <end position="1425"/>
    </location>
</feature>
<feature type="chain" id="PRO_0000460512" description="Protein 3A">
    <location>
        <begin position="1426"/>
        <end position="1568"/>
    </location>
</feature>
<feature type="chain" id="PRO_0000460513" description="Protein 3B-1">
    <location>
        <begin position="1569"/>
        <end position="1591"/>
    </location>
</feature>
<feature type="chain" id="PRO_0000460514" description="Protein 3B-2">
    <location>
        <begin position="1592"/>
        <end position="1615"/>
    </location>
</feature>
<feature type="chain" id="PRO_0000460515" description="Protein 3B-3">
    <location>
        <begin position="1616"/>
        <end position="1639"/>
    </location>
</feature>
<feature type="chain" id="PRO_0000460516" description="Protease 3C">
    <location>
        <begin position="1640"/>
        <end position="1852"/>
    </location>
</feature>
<feature type="chain" id="PRO_0000460517" description="RNA-directed RNA polymerase 3D-POL" evidence="7">
    <location>
        <begin position="1853"/>
        <end position="2322"/>
    </location>
</feature>
<feature type="intramembrane region" evidence="7">
    <location>
        <begin position="1484"/>
        <end position="1504"/>
    </location>
</feature>
<feature type="domain" description="Peptidase C28" evidence="11">
    <location>
        <begin position="29"/>
        <end position="182"/>
    </location>
</feature>
<feature type="domain" description="SF3 helicase" evidence="9">
    <location>
        <begin position="1189"/>
        <end position="1353"/>
    </location>
</feature>
<feature type="domain" description="Peptidase C3" evidence="10">
    <location>
        <begin position="1642"/>
        <end position="1838"/>
    </location>
</feature>
<feature type="domain" description="RdRp catalytic" evidence="8">
    <location>
        <begin position="2086"/>
        <end position="2204"/>
    </location>
</feature>
<feature type="region of interest" description="Disordered" evidence="12">
    <location>
        <begin position="199"/>
        <end position="219"/>
    </location>
</feature>
<feature type="region of interest" description="Disordered" evidence="12">
    <location>
        <begin position="238"/>
        <end position="262"/>
    </location>
</feature>
<feature type="region of interest" description="Disordered" evidence="12">
    <location>
        <begin position="1512"/>
        <end position="1574"/>
    </location>
</feature>
<feature type="short sequence motif" description="Cell attachment site" evidence="3">
    <location>
        <begin position="869"/>
        <end position="871"/>
    </location>
</feature>
<feature type="short sequence motif" description="Nuclear localization signal" evidence="6">
    <location>
        <begin position="1868"/>
        <end position="1876"/>
    </location>
</feature>
<feature type="compositionally biased region" description="Polar residues" evidence="12">
    <location>
        <begin position="204"/>
        <end position="219"/>
    </location>
</feature>
<feature type="compositionally biased region" description="Polar residues" evidence="12">
    <location>
        <begin position="238"/>
        <end position="251"/>
    </location>
</feature>
<feature type="compositionally biased region" description="Low complexity" evidence="12">
    <location>
        <begin position="252"/>
        <end position="262"/>
    </location>
</feature>
<feature type="compositionally biased region" description="Basic and acidic residues" evidence="12">
    <location>
        <begin position="1539"/>
        <end position="1553"/>
    </location>
</feature>
<feature type="active site" description="For leader protease activity" evidence="11">
    <location>
        <position position="51"/>
    </location>
</feature>
<feature type="active site" description="For leader protease activity" evidence="11">
    <location>
        <position position="148"/>
    </location>
</feature>
<feature type="active site" description="For leader protease activity" evidence="11">
    <location>
        <position position="163"/>
    </location>
</feature>
<feature type="active site" description="For protease 3C activity; Proton donor/acceptor" evidence="10">
    <location>
        <position position="1685"/>
    </location>
</feature>
<feature type="active site" description="For protease 3C activity" evidence="10">
    <location>
        <position position="1723"/>
    </location>
</feature>
<feature type="active site" description="For protease 3C activity" evidence="10">
    <location>
        <position position="1802"/>
    </location>
</feature>
<feature type="binding site" evidence="9">
    <location>
        <begin position="1217"/>
        <end position="1224"/>
    </location>
    <ligand>
        <name>ATP</name>
        <dbReference type="ChEBI" id="CHEBI:30616"/>
    </ligand>
</feature>
<feature type="site" description="Cleavage; by leader protease" evidence="7">
    <location>
        <begin position="201"/>
        <end position="202"/>
    </location>
</feature>
<feature type="site" description="Cleavage" evidence="7">
    <location>
        <begin position="286"/>
        <end position="287"/>
    </location>
</feature>
<feature type="site" description="Cleavage; by picornain 3C" evidence="7">
    <location>
        <begin position="504"/>
        <end position="505"/>
    </location>
</feature>
<feature type="site" description="Cleavage; by picornain 3C" evidence="7">
    <location>
        <begin position="724"/>
        <end position="725"/>
    </location>
</feature>
<feature type="site" description="Cleavage; by picornain 3C" evidence="7">
    <location>
        <begin position="935"/>
        <end position="936"/>
    </location>
</feature>
<feature type="site" description="Cleavage; by ribosomal skip" evidence="7">
    <location>
        <begin position="953"/>
        <end position="954"/>
    </location>
</feature>
<feature type="site" description="Cleavage; by picornain 3C" evidence="7">
    <location>
        <begin position="1107"/>
        <end position="1108"/>
    </location>
</feature>
<feature type="site" description="Cleavage; by picornain 3C" evidence="7">
    <location>
        <begin position="1425"/>
        <end position="1426"/>
    </location>
</feature>
<feature type="site" description="Cleavage; by picornain 3C" evidence="7">
    <location>
        <begin position="1568"/>
        <end position="1569"/>
    </location>
</feature>
<feature type="site" description="Cleavage; by picornain 3C" evidence="7">
    <location>
        <begin position="1591"/>
        <end position="1592"/>
    </location>
</feature>
<feature type="site" description="Cleavage; by picornain 3C" evidence="7">
    <location>
        <begin position="1615"/>
        <end position="1616"/>
    </location>
</feature>
<feature type="site" description="Cleavage; by picornain 3C" evidence="7">
    <location>
        <begin position="1639"/>
        <end position="1640"/>
    </location>
</feature>
<feature type="site" description="Cleavage; by picornain 3C" evidence="7">
    <location>
        <begin position="1852"/>
        <end position="1853"/>
    </location>
</feature>
<feature type="modified residue" description="O-(5'-phospho-RNA)-tyrosine" evidence="3">
    <location>
        <position position="1571"/>
    </location>
</feature>
<feature type="modified residue" description="O-(5'-phospho-RNA)-tyrosine" evidence="3">
    <location>
        <position position="1594"/>
    </location>
</feature>
<feature type="modified residue" description="O-(5'-phospho-RNA)-tyrosine" evidence="3">
    <location>
        <position position="1618"/>
    </location>
</feature>
<feature type="lipid moiety-binding region" description="N-myristoyl glycine; by host" evidence="6">
    <location>
        <position position="202"/>
    </location>
</feature>
<feature type="disulfide bond" description="Interchain; in VP3 dimer" evidence="3">
    <location>
        <position position="511"/>
    </location>
</feature>
<feature type="sequence conflict" description="In Ref. 1; AAG45408." evidence="14" ref="1">
    <original>C</original>
    <variation>R</variation>
    <location>
        <position position="416"/>
    </location>
</feature>
<feature type="sequence conflict" description="In Ref. 1; AAG45408." evidence="14" ref="1">
    <original>V</original>
    <variation>A</variation>
    <location>
        <position position="470"/>
    </location>
</feature>
<accession>Q6PMV1</accession>
<accession>Q9DLK1</accession>
<protein>
    <recommendedName>
        <fullName>Genome polyprotein</fullName>
    </recommendedName>
    <component>
        <recommendedName>
            <fullName>Leader protease</fullName>
            <shortName>Lpro</shortName>
            <ecNumber evidence="3">3.4.22.46</ecNumber>
        </recommendedName>
    </component>
    <component>
        <recommendedName>
            <fullName>Capsid protein VP0</fullName>
        </recommendedName>
        <alternativeName>
            <fullName>VP4-VP2</fullName>
        </alternativeName>
    </component>
    <component>
        <recommendedName>
            <fullName>Capsid protein VP4</fullName>
        </recommendedName>
        <alternativeName>
            <fullName>P1A</fullName>
        </alternativeName>
        <alternativeName>
            <fullName>Virion protein 4</fullName>
        </alternativeName>
    </component>
    <component>
        <recommendedName>
            <fullName>Capsid protein VP2</fullName>
        </recommendedName>
        <alternativeName>
            <fullName>P1B</fullName>
        </alternativeName>
        <alternativeName>
            <fullName>Virion protein 2</fullName>
        </alternativeName>
    </component>
    <component>
        <recommendedName>
            <fullName>Capsid protein VP3</fullName>
        </recommendedName>
        <alternativeName>
            <fullName>P1C</fullName>
        </alternativeName>
        <alternativeName>
            <fullName>Virion protein 3</fullName>
        </alternativeName>
    </component>
    <component>
        <recommendedName>
            <fullName>Capsid protein VP1</fullName>
        </recommendedName>
        <alternativeName>
            <fullName>P1D</fullName>
        </alternativeName>
        <alternativeName>
            <fullName>Virion protein 1</fullName>
        </alternativeName>
    </component>
    <component>
        <recommendedName>
            <fullName>Protein 2A</fullName>
            <shortName>P2A</shortName>
        </recommendedName>
        <alternativeName>
            <fullName>P52</fullName>
        </alternativeName>
    </component>
    <component>
        <recommendedName>
            <fullName>Protein 2B</fullName>
            <shortName>P2B</shortName>
        </recommendedName>
    </component>
    <component>
        <recommendedName>
            <fullName>Protein 2C</fullName>
            <shortName>P2C</shortName>
            <ecNumber evidence="3">3.6.1.15</ecNumber>
        </recommendedName>
    </component>
    <component>
        <recommendedName>
            <fullName>Protein 3A</fullName>
            <shortName>P3A</shortName>
        </recommendedName>
    </component>
    <component>
        <recommendedName>
            <fullName>Protein 3B-1</fullName>
            <shortName>P3B-1</shortName>
        </recommendedName>
        <alternativeName>
            <fullName>Genome-linked protein VPg1</fullName>
        </alternativeName>
    </component>
    <component>
        <recommendedName>
            <fullName>Protein 3B-2</fullName>
            <shortName>P3B-2</shortName>
        </recommendedName>
        <alternativeName>
            <fullName>Genome-linked protein VPg2</fullName>
        </alternativeName>
    </component>
    <component>
        <recommendedName>
            <fullName>Protein 3B-3</fullName>
            <shortName>P3B-3</shortName>
        </recommendedName>
        <alternativeName>
            <fullName>Genome-linked protein VPg3</fullName>
        </alternativeName>
    </component>
    <component>
        <recommendedName>
            <fullName>Protease 3C</fullName>
            <ecNumber evidence="3">3.4.22.28</ecNumber>
        </recommendedName>
        <alternativeName>
            <fullName>Picornain 3C</fullName>
            <shortName>P3C</shortName>
        </alternativeName>
        <alternativeName>
            <fullName>Protease P20B</fullName>
        </alternativeName>
    </component>
    <component>
        <recommendedName>
            <fullName>RNA-directed RNA polymerase 3D-POL</fullName>
            <shortName>P3D-POL</shortName>
            <ecNumber>2.7.7.48</ecNumber>
        </recommendedName>
        <alternativeName>
            <fullName>P56A</fullName>
        </alternativeName>
    </component>
</protein>
<name>POLG_FMDVP</name>
<keyword id="KW-0067">ATP-binding</keyword>
<keyword id="KW-0167">Capsid protein</keyword>
<keyword id="KW-1165">Clathrin-mediated endocytosis of virus by host</keyword>
<keyword id="KW-0191">Covalent protein-RNA linkage</keyword>
<keyword id="KW-1015">Disulfide bond</keyword>
<keyword id="KW-0347">Helicase</keyword>
<keyword id="KW-1035">Host cytoplasm</keyword>
<keyword id="KW-1036">Host cytoplasmic vesicle</keyword>
<keyword id="KW-1038">Host endoplasmic reticulum</keyword>
<keyword id="KW-1043">Host membrane</keyword>
<keyword id="KW-1048">Host nucleus</keyword>
<keyword id="KW-0945">Host-virus interaction</keyword>
<keyword id="KW-0378">Hydrolase</keyword>
<keyword id="KW-0407">Ion channel</keyword>
<keyword id="KW-0406">Ion transport</keyword>
<keyword id="KW-0449">Lipoprotein</keyword>
<keyword id="KW-0472">Membrane</keyword>
<keyword id="KW-1122">Modulation of host chromatin by virus</keyword>
<keyword id="KW-0519">Myristate</keyword>
<keyword id="KW-0547">Nucleotide-binding</keyword>
<keyword id="KW-0548">Nucleotidyltransferase</keyword>
<keyword id="KW-0597">Phosphoprotein</keyword>
<keyword id="KW-0645">Protease</keyword>
<keyword id="KW-0696">RNA-directed RNA polymerase</keyword>
<keyword id="KW-1143">T=pseudo3 icosahedral capsid protein</keyword>
<keyword id="KW-0788">Thiol protease</keyword>
<keyword id="KW-0808">Transferase</keyword>
<keyword id="KW-0810">Translation regulation</keyword>
<keyword id="KW-0813">Transport</keyword>
<keyword id="KW-1161">Viral attachment to host cell</keyword>
<keyword id="KW-1182">Viral ion channel</keyword>
<keyword id="KW-1162">Viral penetration into host cytoplasm</keyword>
<keyword id="KW-0693">Viral RNA replication</keyword>
<keyword id="KW-0946">Virion</keyword>
<keyword id="KW-1164">Virus endocytosis by host</keyword>
<keyword id="KW-1160">Virus entry into host cell</keyword>